<proteinExistence type="inferred from homology"/>
<reference key="1">
    <citation type="journal article" date="1996" name="Science">
        <title>Complete genome sequence of the methanogenic archaeon, Methanococcus jannaschii.</title>
        <authorList>
            <person name="Bult C.J."/>
            <person name="White O."/>
            <person name="Olsen G.J."/>
            <person name="Zhou L."/>
            <person name="Fleischmann R.D."/>
            <person name="Sutton G.G."/>
            <person name="Blake J.A."/>
            <person name="FitzGerald L.M."/>
            <person name="Clayton R.A."/>
            <person name="Gocayne J.D."/>
            <person name="Kerlavage A.R."/>
            <person name="Dougherty B.A."/>
            <person name="Tomb J.-F."/>
            <person name="Adams M.D."/>
            <person name="Reich C.I."/>
            <person name="Overbeek R."/>
            <person name="Kirkness E.F."/>
            <person name="Weinstock K.G."/>
            <person name="Merrick J.M."/>
            <person name="Glodek A."/>
            <person name="Scott J.L."/>
            <person name="Geoghagen N.S.M."/>
            <person name="Weidman J.F."/>
            <person name="Fuhrmann J.L."/>
            <person name="Nguyen D."/>
            <person name="Utterback T.R."/>
            <person name="Kelley J.M."/>
            <person name="Peterson J.D."/>
            <person name="Sadow P.W."/>
            <person name="Hanna M.C."/>
            <person name="Cotton M.D."/>
            <person name="Roberts K.M."/>
            <person name="Hurst M.A."/>
            <person name="Kaine B.P."/>
            <person name="Borodovsky M."/>
            <person name="Klenk H.-P."/>
            <person name="Fraser C.M."/>
            <person name="Smith H.O."/>
            <person name="Woese C.R."/>
            <person name="Venter J.C."/>
        </authorList>
    </citation>
    <scope>NUCLEOTIDE SEQUENCE [LARGE SCALE GENOMIC DNA]</scope>
    <source>
        <strain>ATCC 43067 / DSM 2661 / JAL-1 / JCM 10045 / NBRC 100440</strain>
    </source>
</reference>
<evidence type="ECO:0000255" key="1">
    <source>
        <dbReference type="HAMAP-Rule" id="MF_01135"/>
    </source>
</evidence>
<organism>
    <name type="scientific">Methanocaldococcus jannaschii (strain ATCC 43067 / DSM 2661 / JAL-1 / JCM 10045 / NBRC 100440)</name>
    <name type="common">Methanococcus jannaschii</name>
    <dbReference type="NCBI Taxonomy" id="243232"/>
    <lineage>
        <taxon>Archaea</taxon>
        <taxon>Methanobacteriati</taxon>
        <taxon>Methanobacteriota</taxon>
        <taxon>Methanomada group</taxon>
        <taxon>Methanococci</taxon>
        <taxon>Methanococcales</taxon>
        <taxon>Methanocaldococcaceae</taxon>
        <taxon>Methanocaldococcus</taxon>
    </lineage>
</organism>
<comment type="function">
    <text evidence="1">Part of a complex that catalyzes the reversible cleavage of acetyl-CoA, allowing autotrophic growth from CO(2). Probably maintains the overall quaternary structure of the ACDS complex.</text>
</comment>
<comment type="subunit">
    <text evidence="1">Heterodimer of delta and gamma chains. The ACDS complex is made up of alpha, epsilon, beta, gamma and delta chains with a probable stoichiometry of (alpha(2)epsilon(2))(4)-beta(8)-(gamma(1)delta(1))(8).</text>
</comment>
<comment type="similarity">
    <text evidence="1">Belongs to the CdhD family.</text>
</comment>
<gene>
    <name evidence="1" type="primary">cdhD</name>
    <name type="ordered locus">MJ0113</name>
</gene>
<feature type="chain" id="PRO_0000155112" description="Acetyl-CoA decarbonylase/synthase complex subunit delta">
    <location>
        <begin position="1"/>
        <end position="405"/>
    </location>
</feature>
<accession>Q57577</accession>
<keyword id="KW-1185">Reference proteome</keyword>
<name>ACDD_METJA</name>
<dbReference type="EMBL" id="L77117">
    <property type="protein sequence ID" value="AAB98094.1"/>
    <property type="molecule type" value="Genomic_DNA"/>
</dbReference>
<dbReference type="PIR" id="A64314">
    <property type="entry name" value="A64314"/>
</dbReference>
<dbReference type="RefSeq" id="WP_010869605.1">
    <property type="nucleotide sequence ID" value="NC_000909.1"/>
</dbReference>
<dbReference type="SMR" id="Q57577"/>
<dbReference type="FunCoup" id="Q57577">
    <property type="interactions" value="90"/>
</dbReference>
<dbReference type="STRING" id="243232.MJ_0113"/>
<dbReference type="PaxDb" id="243232-MJ_0113"/>
<dbReference type="EnsemblBacteria" id="AAB98094">
    <property type="protein sequence ID" value="AAB98094"/>
    <property type="gene ID" value="MJ_0113"/>
</dbReference>
<dbReference type="GeneID" id="1450954"/>
<dbReference type="KEGG" id="mja:MJ_0113"/>
<dbReference type="eggNOG" id="arCOG01980">
    <property type="taxonomic scope" value="Archaea"/>
</dbReference>
<dbReference type="HOGENOM" id="CLU_040403_0_0_2"/>
<dbReference type="InParanoid" id="Q57577"/>
<dbReference type="OrthoDB" id="67748at2157"/>
<dbReference type="PhylomeDB" id="Q57577"/>
<dbReference type="Proteomes" id="UP000000805">
    <property type="component" value="Chromosome"/>
</dbReference>
<dbReference type="GO" id="GO:0006730">
    <property type="term" value="P:one-carbon metabolic process"/>
    <property type="evidence" value="ECO:0007669"/>
    <property type="project" value="InterPro"/>
</dbReference>
<dbReference type="Gene3D" id="3.20.20.20">
    <property type="entry name" value="Dihydropteroate synthase-like"/>
    <property type="match status" value="1"/>
</dbReference>
<dbReference type="HAMAP" id="MF_01135">
    <property type="entry name" value="CdhD"/>
    <property type="match status" value="1"/>
</dbReference>
<dbReference type="InterPro" id="IPR016041">
    <property type="entry name" value="Ac-CoA_synth_d_su_TIM-brl"/>
</dbReference>
<dbReference type="InterPro" id="IPR051069">
    <property type="entry name" value="ACDS_complex_subunit"/>
</dbReference>
<dbReference type="InterPro" id="IPR004486">
    <property type="entry name" value="CO_DH/Ac-CoA_synth_dsu"/>
</dbReference>
<dbReference type="InterPro" id="IPR011005">
    <property type="entry name" value="Dihydropteroate_synth-like_sf"/>
</dbReference>
<dbReference type="NCBIfam" id="TIGR00381">
    <property type="entry name" value="cdhD"/>
    <property type="match status" value="1"/>
</dbReference>
<dbReference type="NCBIfam" id="NF003378">
    <property type="entry name" value="PRK04452.1-4"/>
    <property type="match status" value="1"/>
</dbReference>
<dbReference type="PANTHER" id="PTHR36214">
    <property type="match status" value="1"/>
</dbReference>
<dbReference type="PANTHER" id="PTHR36214:SF5">
    <property type="entry name" value="ACETYL-COA DECARBONYLASE_SYNTHASE COMPLEX SUBUNIT DELTA"/>
    <property type="match status" value="1"/>
</dbReference>
<dbReference type="Pfam" id="PF03599">
    <property type="entry name" value="CdhD"/>
    <property type="match status" value="1"/>
</dbReference>
<dbReference type="SUPFAM" id="SSF51717">
    <property type="entry name" value="Dihydropteroate synthetase-like"/>
    <property type="match status" value="1"/>
</dbReference>
<sequence>MIYNDRLGEVMDLNTLIKIIEKVGRIEIEDIKITADELIINIPSAPPIVIPQTPSIKEKLAEEGIIEIKDVPELDWEPPVEKYPGYIREVQFGKPKSEGGRGKVVKIGGQRALYRFEEPQPNPPVVTFDIFDIPMPGLPKPIRQFFQDVMEDPCEWAKKCVKEFGADMITIHHISTDPKIKDKSPKEAAKLMEDLLQAVDVPFVIGGSGNPQKDPLVLEACAEVAEGDRCLLASANLELDYKKIVDAAMKYDHNVLAWSIMDPNMARDLNRKLVEAGLDPNRIVMDPTTCALGYGIEFSINAMVRLRLNGLKGDELVNMPMSSGTTNAIGAREAWMNNPEWGPREYRLPLWEITTGITMMMCGVDLFMMLNPISVKTLKEIGKTLTTKPGEVKLNTNNYEWIVSP</sequence>
<protein>
    <recommendedName>
        <fullName evidence="1">Acetyl-CoA decarbonylase/synthase complex subunit delta</fullName>
        <shortName evidence="1">ACDS complex subunit delta</shortName>
    </recommendedName>
    <alternativeName>
        <fullName evidence="1">Corrinoid/iron-sulfur component small subunit</fullName>
    </alternativeName>
</protein>